<keyword id="KW-0963">Cytoplasm</keyword>
<keyword id="KW-0456">Lyase</keyword>
<keyword id="KW-0460">Magnesium</keyword>
<keyword id="KW-0464">Manganese</keyword>
<keyword id="KW-0479">Metal-binding</keyword>
<keyword id="KW-0611">Plant defense</keyword>
<accession>C7E5V9</accession>
<comment type="function">
    <text evidence="3">Sesquiterpene cyclase catalyzing the production of sixfold more beta-farnesene than alpha-bergamotene from farnesyl diphosphate. Involved in indirect defense by producing volatile signals attracting natural enemies of herbivores.</text>
</comment>
<comment type="catalytic activity">
    <reaction evidence="3">
        <text>(2E,6E)-farnesyl diphosphate = (E)-beta-farnesene + diphosphate</text>
        <dbReference type="Rhea" id="RHEA:27425"/>
        <dbReference type="ChEBI" id="CHEBI:10418"/>
        <dbReference type="ChEBI" id="CHEBI:33019"/>
        <dbReference type="ChEBI" id="CHEBI:175763"/>
        <dbReference type="EC" id="4.2.3.47"/>
    </reaction>
</comment>
<comment type="cofactor">
    <cofactor evidence="1">
        <name>Mg(2+)</name>
        <dbReference type="ChEBI" id="CHEBI:18420"/>
    </cofactor>
    <cofactor evidence="1">
        <name>Co(2+)</name>
        <dbReference type="ChEBI" id="CHEBI:48828"/>
    </cofactor>
    <cofactor evidence="1">
        <name>Mn(2+)</name>
        <dbReference type="ChEBI" id="CHEBI:29035"/>
    </cofactor>
</comment>
<comment type="pathway">
    <text>Secondary metabolite biosynthesis; terpenoid biosynthesis.</text>
</comment>
<comment type="subcellular location">
    <subcellularLocation>
        <location evidence="4">Cytoplasm</location>
    </subcellularLocation>
</comment>
<comment type="domain">
    <text>The Asp-Asp-Xaa-Xaa-Asp/Glu (DDXXD/E) motif is important for the catalytic activity, presumably through binding to Mg(2+).</text>
</comment>
<comment type="similarity">
    <text evidence="4">Belongs to the terpene synthase family.</text>
</comment>
<feature type="chain" id="PRO_0000402132" description="(E)-beta-farnesene synthase">
    <location>
        <begin position="1"/>
        <end position="533"/>
    </location>
</feature>
<feature type="short sequence motif" description="DDXXD motif">
    <location>
        <begin position="286"/>
        <end position="290"/>
    </location>
</feature>
<feature type="binding site" evidence="2">
    <location>
        <position position="286"/>
    </location>
    <ligand>
        <name>Mg(2+)</name>
        <dbReference type="ChEBI" id="CHEBI:18420"/>
        <label>1</label>
    </ligand>
</feature>
<feature type="binding site" evidence="2">
    <location>
        <position position="286"/>
    </location>
    <ligand>
        <name>Mg(2+)</name>
        <dbReference type="ChEBI" id="CHEBI:18420"/>
        <label>2</label>
    </ligand>
</feature>
<feature type="binding site" evidence="2">
    <location>
        <position position="290"/>
    </location>
    <ligand>
        <name>Mg(2+)</name>
        <dbReference type="ChEBI" id="CHEBI:18420"/>
        <label>1</label>
    </ligand>
</feature>
<feature type="binding site" evidence="2">
    <location>
        <position position="290"/>
    </location>
    <ligand>
        <name>Mg(2+)</name>
        <dbReference type="ChEBI" id="CHEBI:18420"/>
        <label>2</label>
    </ligand>
</feature>
<feature type="binding site" evidence="2">
    <location>
        <position position="430"/>
    </location>
    <ligand>
        <name>Mg(2+)</name>
        <dbReference type="ChEBI" id="CHEBI:18420"/>
        <label>3</label>
    </ligand>
</feature>
<feature type="binding site" evidence="2">
    <location>
        <position position="434"/>
    </location>
    <ligand>
        <name>Mg(2+)</name>
        <dbReference type="ChEBI" id="CHEBI:18420"/>
        <label>3</label>
    </ligand>
</feature>
<feature type="binding site" evidence="2">
    <location>
        <position position="438"/>
    </location>
    <ligand>
        <name>Mg(2+)</name>
        <dbReference type="ChEBI" id="CHEBI:18420"/>
        <label>3</label>
    </ligand>
</feature>
<feature type="mutagenesis site" description="Decreased production of beta-farnesene and increased production of alpha-bergamotene." evidence="3">
    <original>F</original>
    <variation>L</variation>
    <location>
        <position position="356"/>
    </location>
</feature>
<proteinExistence type="evidence at protein level"/>
<sequence length="533" mass="61532">MDATAFHPSLWGDFFVKYKPPTAPKRGHMTQRAELLKEEVRKTLKAAANQIKNALDLIITLQRLGLDHHYENEISELLRFVYSSSDYDDKDLYVVSLRFYLLRKHGHCVSSDVFTSFKDEEGNFVVDDTKCLLSLYNAAYLRTHGEKVLDEAITFTRRQLEALLLDSLEPALADEVHLTLQTPLFRRLRILEAVNYIPIYGKEAGRNEAILELAKLNFNLAQLIYCEELKEITLWWKQLNVETNLSFIRDRIVECHFWMTGACCEPQYSLSRVIATKMTALITVLDDMMDTYSTTEEAMLLAEAIYRWEESAAELLPGYMKDFYLYLLKTIDSCGDELGPNRSFRTFYLKEMLKVFVRGSSQEIKWRNENYVPKTISEHLEHSGPTVGAFQVACSSFVGMGDNITKESFEWLLTYPELVKSLMNIARLLNDTASTKREQNAGHHVSTVQCYMLKHGTTMDEACDKIKELTEDSWKDMMELYLTPTEHPKLIAQTIVDFARTADYMYKETDGFTFSHTIKDMIAKLFVDPISLF</sequence>
<protein>
    <recommendedName>
        <fullName>(E)-beta-farnesene synthase</fullName>
        <ecNumber>4.2.3.47</ecNumber>
    </recommendedName>
    <alternativeName>
        <fullName>Terpene synthase 10</fullName>
    </alternativeName>
</protein>
<dbReference type="EC" id="4.2.3.47"/>
<dbReference type="EMBL" id="GQ253106">
    <property type="protein sequence ID" value="ACT37405.1"/>
    <property type="molecule type" value="mRNA"/>
</dbReference>
<dbReference type="SMR" id="C7E5V9"/>
<dbReference type="BRENDA" id="4.2.3.47">
    <property type="organism ID" value="6750"/>
</dbReference>
<dbReference type="UniPathway" id="UPA00213"/>
<dbReference type="GO" id="GO:0005737">
    <property type="term" value="C:cytoplasm"/>
    <property type="evidence" value="ECO:0007669"/>
    <property type="project" value="UniProtKB-SubCell"/>
</dbReference>
<dbReference type="GO" id="GO:0000287">
    <property type="term" value="F:magnesium ion binding"/>
    <property type="evidence" value="ECO:0007669"/>
    <property type="project" value="InterPro"/>
</dbReference>
<dbReference type="GO" id="GO:0010333">
    <property type="term" value="F:terpene synthase activity"/>
    <property type="evidence" value="ECO:0007669"/>
    <property type="project" value="InterPro"/>
</dbReference>
<dbReference type="GO" id="GO:0006952">
    <property type="term" value="P:defense response"/>
    <property type="evidence" value="ECO:0007669"/>
    <property type="project" value="UniProtKB-KW"/>
</dbReference>
<dbReference type="GO" id="GO:0016102">
    <property type="term" value="P:diterpenoid biosynthetic process"/>
    <property type="evidence" value="ECO:0007669"/>
    <property type="project" value="InterPro"/>
</dbReference>
<dbReference type="CDD" id="cd00684">
    <property type="entry name" value="Terpene_cyclase_plant_C1"/>
    <property type="match status" value="1"/>
</dbReference>
<dbReference type="FunFam" id="1.10.600.10:FF:000007">
    <property type="entry name" value="Isoprene synthase, chloroplastic"/>
    <property type="match status" value="1"/>
</dbReference>
<dbReference type="Gene3D" id="1.10.600.10">
    <property type="entry name" value="Farnesyl Diphosphate Synthase"/>
    <property type="match status" value="1"/>
</dbReference>
<dbReference type="Gene3D" id="1.50.10.130">
    <property type="entry name" value="Terpene synthase, N-terminal domain"/>
    <property type="match status" value="1"/>
</dbReference>
<dbReference type="InterPro" id="IPR008949">
    <property type="entry name" value="Isoprenoid_synthase_dom_sf"/>
</dbReference>
<dbReference type="InterPro" id="IPR034741">
    <property type="entry name" value="Terpene_cyclase-like_1_C"/>
</dbReference>
<dbReference type="InterPro" id="IPR044814">
    <property type="entry name" value="Terpene_cyclase_plant_C1"/>
</dbReference>
<dbReference type="InterPro" id="IPR001906">
    <property type="entry name" value="Terpene_synth_N"/>
</dbReference>
<dbReference type="InterPro" id="IPR036965">
    <property type="entry name" value="Terpene_synth_N_sf"/>
</dbReference>
<dbReference type="InterPro" id="IPR050148">
    <property type="entry name" value="Terpene_synthase-like"/>
</dbReference>
<dbReference type="InterPro" id="IPR005630">
    <property type="entry name" value="Terpene_synthase_metal-bd"/>
</dbReference>
<dbReference type="InterPro" id="IPR008930">
    <property type="entry name" value="Terpenoid_cyclase/PrenylTrfase"/>
</dbReference>
<dbReference type="PANTHER" id="PTHR31225:SF118">
    <property type="entry name" value="(E)-BETA-FARNESENE SYNTHASE"/>
    <property type="match status" value="1"/>
</dbReference>
<dbReference type="PANTHER" id="PTHR31225">
    <property type="entry name" value="OS04G0344100 PROTEIN-RELATED"/>
    <property type="match status" value="1"/>
</dbReference>
<dbReference type="Pfam" id="PF01397">
    <property type="entry name" value="Terpene_synth"/>
    <property type="match status" value="1"/>
</dbReference>
<dbReference type="Pfam" id="PF03936">
    <property type="entry name" value="Terpene_synth_C"/>
    <property type="match status" value="1"/>
</dbReference>
<dbReference type="SFLD" id="SFLDS00005">
    <property type="entry name" value="Isoprenoid_Synthase_Type_I"/>
    <property type="match status" value="1"/>
</dbReference>
<dbReference type="SFLD" id="SFLDG01019">
    <property type="entry name" value="Terpene_Cyclase_Like_1_C_Termi"/>
    <property type="match status" value="1"/>
</dbReference>
<dbReference type="SUPFAM" id="SSF48239">
    <property type="entry name" value="Terpenoid cyclases/Protein prenyltransferases"/>
    <property type="match status" value="1"/>
</dbReference>
<dbReference type="SUPFAM" id="SSF48576">
    <property type="entry name" value="Terpenoid synthases"/>
    <property type="match status" value="1"/>
</dbReference>
<name>FARS_ZEADI</name>
<evidence type="ECO:0000250" key="1"/>
<evidence type="ECO:0000250" key="2">
    <source>
        <dbReference type="UniProtKB" id="Q40577"/>
    </source>
</evidence>
<evidence type="ECO:0000269" key="3">
    <source>
    </source>
</evidence>
<evidence type="ECO:0000305" key="4"/>
<reference key="1">
    <citation type="journal article" date="2009" name="Phytochemistry">
        <title>Molecular and biochemical evolution of maize terpene synthase 10, an enzyme of indirect defense.</title>
        <authorList>
            <person name="Koellner T.G."/>
            <person name="Gershenzon J."/>
            <person name="Degenhardt J."/>
        </authorList>
    </citation>
    <scope>NUCLEOTIDE SEQUENCE [MRNA]</scope>
    <scope>FUNCTION</scope>
    <scope>CATALYTIC ACTIVITY</scope>
    <scope>MUTAGENESIS OF PHE-356</scope>
</reference>
<organism>
    <name type="scientific">Zea diploperennis</name>
    <name type="common">Diploperennial teosinte</name>
    <dbReference type="NCBI Taxonomy" id="4576"/>
    <lineage>
        <taxon>Eukaryota</taxon>
        <taxon>Viridiplantae</taxon>
        <taxon>Streptophyta</taxon>
        <taxon>Embryophyta</taxon>
        <taxon>Tracheophyta</taxon>
        <taxon>Spermatophyta</taxon>
        <taxon>Magnoliopsida</taxon>
        <taxon>Liliopsida</taxon>
        <taxon>Poales</taxon>
        <taxon>Poaceae</taxon>
        <taxon>PACMAD clade</taxon>
        <taxon>Panicoideae</taxon>
        <taxon>Andropogonodae</taxon>
        <taxon>Andropogoneae</taxon>
        <taxon>Tripsacinae</taxon>
        <taxon>Zea</taxon>
    </lineage>
</organism>